<accession>P0A433</accession>
<accession>P13739</accession>
<accession>P16648</accession>
<proteinExistence type="evidence at protein level"/>
<evidence type="ECO:0000250" key="1"/>
<evidence type="ECO:0000255" key="2">
    <source>
        <dbReference type="PROSITE-ProRule" id="PRU00648"/>
    </source>
</evidence>
<evidence type="ECO:0000255" key="3">
    <source>
        <dbReference type="PROSITE-ProRule" id="PRU00679"/>
    </source>
</evidence>
<evidence type="ECO:0000269" key="4">
    <source>
    </source>
</evidence>
<evidence type="ECO:0000269" key="5">
    <source>
    </source>
</evidence>
<evidence type="ECO:0007744" key="6">
    <source>
        <dbReference type="PDB" id="1P6B"/>
    </source>
</evidence>
<evidence type="ECO:0007744" key="7">
    <source>
        <dbReference type="PDB" id="1P6C"/>
    </source>
</evidence>
<evidence type="ECO:0007829" key="8">
    <source>
        <dbReference type="PDB" id="1P6B"/>
    </source>
</evidence>
<organism>
    <name type="scientific">Sphingobium fuliginis (strain ATCC 27551)</name>
    <dbReference type="NCBI Taxonomy" id="336203"/>
    <lineage>
        <taxon>Bacteria</taxon>
        <taxon>Pseudomonadati</taxon>
        <taxon>Pseudomonadota</taxon>
        <taxon>Alphaproteobacteria</taxon>
        <taxon>Sphingomonadales</taxon>
        <taxon>Sphingomonadaceae</taxon>
        <taxon>Sphingobium</taxon>
    </lineage>
</organism>
<reference key="1">
    <citation type="journal article" date="1989" name="J. Bacteriol.">
        <title>Parathion hydrolase specified by the Flavobacterium opd gene: relationship between the gene and protein.</title>
        <authorList>
            <person name="Mulbry W.W."/>
            <person name="Karns J.S."/>
        </authorList>
    </citation>
    <scope>NUCLEOTIDE SEQUENCE [GENOMIC DNA]</scope>
    <scope>PROTEIN SEQUENCE OF 30-53</scope>
</reference>
<reference key="2">
    <citation type="journal article" date="2003" name="J. Am. Chem. Soc.">
        <title>Enhanced degradation of chemical warfare agents through molecular engineering of the phosphotriesterase active site.</title>
        <authorList>
            <person name="Hill C.M."/>
            <person name="Li W.S."/>
            <person name="Thoden J.B."/>
            <person name="Holden H.M."/>
            <person name="Raushel F.M."/>
        </authorList>
    </citation>
    <scope>X-RAY CRYSTALLOGRAPHY (1.9 ANGSTROMS) OF 30-365</scope>
    <scope>CARBOXYLATION AT LYS-169</scope>
</reference>
<name>OPD_SPHSA</name>
<comment type="function">
    <text evidence="1">Has an unusual substrate specificity for synthetic organophosphate triesters and phosphorofluoridates. All of the phosphate triesters found to be substrates are synthetic compounds. The identity of any naturally occurring substrate for the enzyme is unknown. Has no detectable activity with phosphate monoesters or diesters and no activity as an esterase or protease. It catalyzes the hydrolysis of the insecticide paraoxon at a rate approaching the diffusion limit and thus appears to be optimally evolved for utilizing this synthetic substrate (By similarity).</text>
</comment>
<comment type="catalytic activity">
    <reaction>
        <text>An aryl dialkyl phosphate + H2O = dialkyl phosphate + an aryl alcohol.</text>
        <dbReference type="EC" id="3.1.8.1"/>
    </reaction>
</comment>
<comment type="cofactor">
    <cofactor evidence="3">
        <name>Zn(2+)</name>
        <dbReference type="ChEBI" id="CHEBI:29105"/>
    </cofactor>
    <text evidence="3">Binds 2 Zn(2+) ions per subunit.</text>
</comment>
<comment type="subunit">
    <text evidence="1">Homodimer.</text>
</comment>
<comment type="subcellular location">
    <subcellularLocation>
        <location evidence="1">Cell membrane</location>
        <topology evidence="1">Peripheral membrane protein</topology>
    </subcellularLocation>
</comment>
<comment type="PTM">
    <text>Predicted to be exported by the Tat system. The position of the signal peptide cleavage has been experimentally proven.</text>
</comment>
<comment type="similarity">
    <text evidence="3">Belongs to the metallo-dependent hydrolases superfamily. Phosphotriesterase family.</text>
</comment>
<sequence>MQTRRVVLKSAAAAGTLLGGLAGCASVAGSIGTGDRINTVRGPITISEAGFTLTHEHICGSSAGFLRAWPEFFGSRKALAEKAVRGLRRARAAGVRTIVDVSTFDIGRDVSLLAEVSRAADVHIVAATGLWFDPPLSMRLRSVEELTQFFLREIQYGIEDTGIRAGIIKVATTGKATPFQELVLKAAARASLATGVPVTTHTAASQRDGEQQAAIFESEGLSPSRVCIGHSDDTDDLSYLTALAARGYLIGLDHIPHSAIGLEDNASASALLGIRSWQTRALLIKALIDQGYMKQILVSNDWLFGFSSYVTNIMDVMDRVNPDGMAFIPLRVIPFLREKGVPQETLAGITVTNPARFLSPTLRAS</sequence>
<dbReference type="EC" id="3.1.8.1"/>
<dbReference type="EMBL" id="M29593">
    <property type="protein sequence ID" value="AAA24930.1"/>
    <property type="molecule type" value="Genomic_DNA"/>
</dbReference>
<dbReference type="PIR" id="A43720">
    <property type="entry name" value="A43720"/>
</dbReference>
<dbReference type="PDB" id="1P6B">
    <property type="method" value="X-ray"/>
    <property type="resolution" value="1.90 A"/>
    <property type="chains" value="A/B=30-365"/>
</dbReference>
<dbReference type="PDB" id="1P6C">
    <property type="method" value="X-ray"/>
    <property type="resolution" value="2.00 A"/>
    <property type="chains" value="A/B=30-365"/>
</dbReference>
<dbReference type="PDBsum" id="1P6B"/>
<dbReference type="PDBsum" id="1P6C"/>
<dbReference type="SMR" id="P0A433"/>
<dbReference type="DrugBank" id="DB02437">
    <property type="generic name" value="(5r)-5-Amino-6-Hydroxyhexylcarbamic Acid"/>
</dbReference>
<dbReference type="DrugBank" id="DB02138">
    <property type="generic name" value="Diethyl 4-Methylbenzylphosphonate"/>
</dbReference>
<dbReference type="DrugBank" id="DB02127">
    <property type="generic name" value="Diisopropyl methylphosphonate"/>
</dbReference>
<dbReference type="DrugBank" id="DB03822">
    <property type="generic name" value="Ethyl dihydrogen phosphate"/>
</dbReference>
<dbReference type="DrugBank" id="DB03801">
    <property type="generic name" value="Lysine Nz-Carboxylic Acid"/>
</dbReference>
<dbReference type="DrugBank" id="DB02192">
    <property type="generic name" value="Phenylethyl alcohol"/>
</dbReference>
<dbReference type="DrugBank" id="DB03347">
    <property type="generic name" value="Triethyl phosphate"/>
</dbReference>
<dbReference type="BioCyc" id="MetaCyc:MONOMER-3321"/>
<dbReference type="BRENDA" id="3.1.8.1">
    <property type="organism ID" value="2302"/>
</dbReference>
<dbReference type="BRENDA" id="3.1.8.2">
    <property type="organism ID" value="16550"/>
</dbReference>
<dbReference type="EvolutionaryTrace" id="P0A433"/>
<dbReference type="GO" id="GO:0005886">
    <property type="term" value="C:plasma membrane"/>
    <property type="evidence" value="ECO:0007669"/>
    <property type="project" value="UniProtKB-SubCell"/>
</dbReference>
<dbReference type="GO" id="GO:0004063">
    <property type="term" value="F:aryldialkylphosphatase activity"/>
    <property type="evidence" value="ECO:0007669"/>
    <property type="project" value="UniProtKB-EC"/>
</dbReference>
<dbReference type="GO" id="GO:0008270">
    <property type="term" value="F:zinc ion binding"/>
    <property type="evidence" value="ECO:0007669"/>
    <property type="project" value="InterPro"/>
</dbReference>
<dbReference type="GO" id="GO:0009056">
    <property type="term" value="P:catabolic process"/>
    <property type="evidence" value="ECO:0007669"/>
    <property type="project" value="InterPro"/>
</dbReference>
<dbReference type="CDD" id="cd00530">
    <property type="entry name" value="PTE"/>
    <property type="match status" value="1"/>
</dbReference>
<dbReference type="FunFam" id="3.20.20.140:FF:000073">
    <property type="entry name" value="Parathion hydrolase"/>
    <property type="match status" value="1"/>
</dbReference>
<dbReference type="Gene3D" id="3.20.20.140">
    <property type="entry name" value="Metal-dependent hydrolases"/>
    <property type="match status" value="1"/>
</dbReference>
<dbReference type="InterPro" id="IPR017947">
    <property type="entry name" value="AryldialkylPase_Zn-BS"/>
</dbReference>
<dbReference type="InterPro" id="IPR032466">
    <property type="entry name" value="Metal_Hydrolase"/>
</dbReference>
<dbReference type="InterPro" id="IPR001559">
    <property type="entry name" value="Phosphotriesterase"/>
</dbReference>
<dbReference type="InterPro" id="IPR006311">
    <property type="entry name" value="TAT_signal"/>
</dbReference>
<dbReference type="NCBIfam" id="NF041153">
    <property type="entry name" value="organophos_OPH"/>
    <property type="match status" value="1"/>
</dbReference>
<dbReference type="PANTHER" id="PTHR10819">
    <property type="entry name" value="PHOSPHOTRIESTERASE-RELATED"/>
    <property type="match status" value="1"/>
</dbReference>
<dbReference type="PANTHER" id="PTHR10819:SF3">
    <property type="entry name" value="PHOSPHOTRIESTERASE-RELATED PROTEIN"/>
    <property type="match status" value="1"/>
</dbReference>
<dbReference type="Pfam" id="PF02126">
    <property type="entry name" value="PTE"/>
    <property type="match status" value="1"/>
</dbReference>
<dbReference type="SUPFAM" id="SSF51556">
    <property type="entry name" value="Metallo-dependent hydrolases"/>
    <property type="match status" value="1"/>
</dbReference>
<dbReference type="PROSITE" id="PS01322">
    <property type="entry name" value="PHOSPHOTRIESTERASE_1"/>
    <property type="match status" value="1"/>
</dbReference>
<dbReference type="PROSITE" id="PS51347">
    <property type="entry name" value="PHOSPHOTRIESTERASE_2"/>
    <property type="match status" value="1"/>
</dbReference>
<dbReference type="PROSITE" id="PS51318">
    <property type="entry name" value="TAT"/>
    <property type="match status" value="1"/>
</dbReference>
<geneLocation type="plasmid">
    <name>pPDL2</name>
</geneLocation>
<protein>
    <recommendedName>
        <fullName>Parathion hydrolase</fullName>
        <ecNumber>3.1.8.1</ecNumber>
    </recommendedName>
    <alternativeName>
        <fullName>Phosphotriesterase</fullName>
        <shortName>PTE</shortName>
    </alternativeName>
</protein>
<gene>
    <name type="primary">opd</name>
</gene>
<keyword id="KW-0002">3D-structure</keyword>
<keyword id="KW-1003">Cell membrane</keyword>
<keyword id="KW-0903">Direct protein sequencing</keyword>
<keyword id="KW-0378">Hydrolase</keyword>
<keyword id="KW-0472">Membrane</keyword>
<keyword id="KW-0479">Metal-binding</keyword>
<keyword id="KW-0614">Plasmid</keyword>
<keyword id="KW-0732">Signal</keyword>
<keyword id="KW-0862">Zinc</keyword>
<feature type="signal peptide" description="Tat-type signal" evidence="2 5">
    <location>
        <begin position="1"/>
        <end position="29"/>
    </location>
</feature>
<feature type="chain" id="PRO_0000029861" description="Parathion hydrolase">
    <location>
        <begin position="30"/>
        <end position="365"/>
    </location>
</feature>
<feature type="binding site" evidence="4 6 7">
    <location>
        <position position="55"/>
    </location>
    <ligand>
        <name>Zn(2+)</name>
        <dbReference type="ChEBI" id="CHEBI:29105"/>
        <label>1</label>
    </ligand>
</feature>
<feature type="binding site" evidence="4 6 7">
    <location>
        <position position="57"/>
    </location>
    <ligand>
        <name>Zn(2+)</name>
        <dbReference type="ChEBI" id="CHEBI:29105"/>
        <label>1</label>
    </ligand>
</feature>
<feature type="binding site" description="via carbamate group" evidence="4 6 7">
    <location>
        <position position="169"/>
    </location>
    <ligand>
        <name>Zn(2+)</name>
        <dbReference type="ChEBI" id="CHEBI:29105"/>
        <label>1</label>
    </ligand>
</feature>
<feature type="binding site" description="via carbamate group" evidence="4 6 7">
    <location>
        <position position="169"/>
    </location>
    <ligand>
        <name>Zn(2+)</name>
        <dbReference type="ChEBI" id="CHEBI:29105"/>
        <label>2</label>
    </ligand>
</feature>
<feature type="binding site" evidence="4 6 7">
    <location>
        <position position="201"/>
    </location>
    <ligand>
        <name>Zn(2+)</name>
        <dbReference type="ChEBI" id="CHEBI:29105"/>
        <label>2</label>
    </ligand>
</feature>
<feature type="binding site" evidence="4 6 7">
    <location>
        <position position="230"/>
    </location>
    <ligand>
        <name>Zn(2+)</name>
        <dbReference type="ChEBI" id="CHEBI:29105"/>
        <label>2</label>
    </ligand>
</feature>
<feature type="binding site" evidence="4 6 7">
    <location>
        <position position="301"/>
    </location>
    <ligand>
        <name>Zn(2+)</name>
        <dbReference type="ChEBI" id="CHEBI:29105"/>
        <label>1</label>
    </ligand>
</feature>
<feature type="modified residue" description="N6-carboxylysine" evidence="3 4 6 7">
    <location>
        <position position="169"/>
    </location>
</feature>
<feature type="strand" evidence="8">
    <location>
        <begin position="36"/>
        <end position="39"/>
    </location>
</feature>
<feature type="strand" evidence="8">
    <location>
        <begin position="42"/>
        <end position="45"/>
    </location>
</feature>
<feature type="helix" evidence="8">
    <location>
        <begin position="46"/>
        <end position="48"/>
    </location>
</feature>
<feature type="strand" evidence="8">
    <location>
        <begin position="51"/>
        <end position="56"/>
    </location>
</feature>
<feature type="strand" evidence="8">
    <location>
        <begin position="58"/>
        <end position="60"/>
    </location>
</feature>
<feature type="helix" evidence="8">
    <location>
        <begin position="65"/>
        <end position="68"/>
    </location>
</feature>
<feature type="helix" evidence="8">
    <location>
        <begin position="70"/>
        <end position="73"/>
    </location>
</feature>
<feature type="helix" evidence="8">
    <location>
        <begin position="76"/>
        <end position="92"/>
    </location>
</feature>
<feature type="strand" evidence="8">
    <location>
        <begin position="97"/>
        <end position="100"/>
    </location>
</feature>
<feature type="helix" evidence="8">
    <location>
        <begin position="104"/>
        <end position="106"/>
    </location>
</feature>
<feature type="helix" evidence="8">
    <location>
        <begin position="110"/>
        <end position="120"/>
    </location>
</feature>
<feature type="strand" evidence="8">
    <location>
        <begin position="123"/>
        <end position="125"/>
    </location>
</feature>
<feature type="strand" evidence="8">
    <location>
        <begin position="127"/>
        <end position="129"/>
    </location>
</feature>
<feature type="helix" evidence="8">
    <location>
        <begin position="136"/>
        <end position="139"/>
    </location>
</feature>
<feature type="helix" evidence="8">
    <location>
        <begin position="143"/>
        <end position="155"/>
    </location>
</feature>
<feature type="strand" evidence="8">
    <location>
        <begin position="167"/>
        <end position="171"/>
    </location>
</feature>
<feature type="strand" evidence="8">
    <location>
        <begin position="173"/>
        <end position="175"/>
    </location>
</feature>
<feature type="helix" evidence="8">
    <location>
        <begin position="178"/>
        <end position="194"/>
    </location>
</feature>
<feature type="strand" evidence="8">
    <location>
        <begin position="198"/>
        <end position="201"/>
    </location>
</feature>
<feature type="helix" evidence="8">
    <location>
        <begin position="204"/>
        <end position="206"/>
    </location>
</feature>
<feature type="helix" evidence="8">
    <location>
        <begin position="208"/>
        <end position="218"/>
    </location>
</feature>
<feature type="helix" evidence="8">
    <location>
        <begin position="223"/>
        <end position="225"/>
    </location>
</feature>
<feature type="strand" evidence="8">
    <location>
        <begin position="226"/>
        <end position="228"/>
    </location>
</feature>
<feature type="helix" evidence="8">
    <location>
        <begin position="231"/>
        <end position="233"/>
    </location>
</feature>
<feature type="helix" evidence="8">
    <location>
        <begin position="237"/>
        <end position="245"/>
    </location>
</feature>
<feature type="strand" evidence="8">
    <location>
        <begin position="249"/>
        <end position="252"/>
    </location>
</feature>
<feature type="helix" evidence="8">
    <location>
        <begin position="266"/>
        <end position="272"/>
    </location>
</feature>
<feature type="helix" evidence="8">
    <location>
        <begin position="277"/>
        <end position="289"/>
    </location>
</feature>
<feature type="helix" evidence="8">
    <location>
        <begin position="293"/>
        <end position="295"/>
    </location>
</feature>
<feature type="strand" evidence="8">
    <location>
        <begin position="296"/>
        <end position="298"/>
    </location>
</feature>
<feature type="strand" evidence="8">
    <location>
        <begin position="304"/>
        <end position="306"/>
    </location>
</feature>
<feature type="strand" evidence="8">
    <location>
        <begin position="308"/>
        <end position="310"/>
    </location>
</feature>
<feature type="helix" evidence="8">
    <location>
        <begin position="313"/>
        <end position="320"/>
    </location>
</feature>
<feature type="helix" evidence="8">
    <location>
        <begin position="324"/>
        <end position="326"/>
    </location>
</feature>
<feature type="helix" evidence="8">
    <location>
        <begin position="327"/>
        <end position="337"/>
    </location>
</feature>
<feature type="turn" evidence="8">
    <location>
        <begin position="338"/>
        <end position="340"/>
    </location>
</feature>
<feature type="helix" evidence="8">
    <location>
        <begin position="343"/>
        <end position="350"/>
    </location>
</feature>
<feature type="helix" evidence="8">
    <location>
        <begin position="352"/>
        <end position="358"/>
    </location>
</feature>